<proteinExistence type="evidence at protein level"/>
<sequence length="836" mass="99420">MVLLNGKLKYIAVVAIFYNLIILLVKEKFPYICTKKKFHAISNRILYEYLNNFVSKDIFRREDITLKNLNFVQTNLKSDKDAEIKENRDTQSVDDNMFQRVYKFILNFFYGNKKNRINKSMNYGKYDNFNKINDIFEFMRNNGLPINITSVCLIDTGLNIKDALINYFLNHDISTYNSYTYHSVNINYKKPDSFNFGINSENCDEDNYSECESTFLENHNGHGKYEDKSTIQGDSLKLIEKKYDKNVDLQRSGIDVEICKAFNNSKEKKNSLNIIPVIKCLEYCKTKNVKIIHMDYNINEQNEQLIQIMDDLKNSEIFVILPSEKLFNEKPYEDNSVIYPSSFFEKFENVFFIGSLDYSDMSSDDADIASNFQIQKNEYLKYRKNNVFLLDSINSSLKKRDDHDILYYEIKYSSAFFINIITIILNIYPNMSIKELRNILSYSIPSKETAQLKTENIFEGNFDINKFIHILLNRGINSSGFVRKYKDVTPNESTNKIFLLEDQKDADIEPQKDSSIDIYCDEGGSDEDIVSTSNGLDVYSEYSHSNNKSDQLLNDEKGLKYETYKDLYSVKENDIYVFESNNPTNSSFMQMNYDDKIKSKYLDNLEEANYQNHRTQFEINRNDNRYPIISEDNLRDRQNMHNIQMLNDGINYSENANNIEELYDNDFEDYRGKDLNPEYNKIRDNNNNKNINKEFGILNTWRKNNEGLYLSDSEEESQPFKWMDMHVDDIYQDRKKRLKGNNYDNRNGRVRRIYEDNKRGRYIKNRNMQKKKNFDRNLKNKRYLNRRTKRHINEKNKRIMREKKNKYNNSVLKRNEMKSHNNSQKTPKIIPRKYSR</sequence>
<comment type="function">
    <text evidence="5 6">Probable serine protease which plays a role in ookinete traversal of the mosquito host midgut epithelium.</text>
</comment>
<comment type="catalytic activity">
    <reaction evidence="2">
        <text>Hydrolysis of proteins with broad specificity for peptide bonds, and a preference for a large uncharged residue in P1. Hydrolyzes peptide amides.</text>
        <dbReference type="EC" id="3.4.21.62"/>
    </reaction>
</comment>
<comment type="subcellular location">
    <subcellularLocation>
        <location evidence="5">Cell membrane</location>
    </subcellularLocation>
    <text evidence="9">It is not clear how the protein localizes at the cell membrane. There is a predicted transmembrane domain encompassing the end of the catalytic domain which appears to be intracellular suggesting a single-pass type II membrane topology.</text>
</comment>
<comment type="developmental stage">
    <text evidence="5">Expression is restricted to mosquito host midgut stages (at protein level) (PubMed:28559405). Specifically, expression begins after gametocyte activation and peaks in mature ookinetes (at protein level) (PubMed:28559405). Not expressed in the oocyst (PubMed:28559405).</text>
</comment>
<comment type="disruption phenotype">
    <text evidence="5 6">Ookinetes fail to traverse the midgut epithelium resulting in a reduced number of oocysts in the gut epithelium of the mosquito host, A.gambiae or A.stephensi (PubMed:28559405, PubMed:29873127). Gametogenesis, and ookinete development and motility are normal (PubMed:28559405). The capacity to infect the mouse host by the few sporozoites made in the mosquito host is not affected (PubMed:28559405).</text>
</comment>
<comment type="similarity">
    <text evidence="8">Belongs to the peptidase S8 family.</text>
</comment>
<comment type="caution">
    <text evidence="7">The three residues, Asp, His and Ser forming the catalytic triad are conserved (PubMed:28559405). However, the conserved motifs HGT and GTS, which encompass His and Ser residues of subtilases, respectively, are not present in PIMMS2, suggesting that the catalytic triad may be non-functional (PubMed:28559405).</text>
</comment>
<feature type="chain" id="PRO_0000451407" description="Subtilisin-like protease PIMMS2">
    <location>
        <begin position="1"/>
        <end position="836"/>
    </location>
</feature>
<feature type="region of interest" description="Disordered" evidence="4">
    <location>
        <begin position="802"/>
        <end position="836"/>
    </location>
</feature>
<feature type="active site" description="Charge relay system" evidence="3">
    <location>
        <position position="155"/>
    </location>
</feature>
<feature type="active site" description="Charge relay system" evidence="1">
    <location>
        <position position="222"/>
    </location>
</feature>
<feature type="active site" description="Charge relay system" evidence="1">
    <location>
        <position position="414"/>
    </location>
</feature>
<feature type="mutagenesis site" description="Reduced number of oocysts in the gut epithelium of the mosquito host; when associated with A-222 and A-414." evidence="5">
    <original>D</original>
    <variation>A</variation>
    <location>
        <position position="155"/>
    </location>
</feature>
<feature type="mutagenesis site" description="Reduced number of oocysts in the gut epithelium of the mosquito host; when associated with A-155 and A-414." evidence="5">
    <original>H</original>
    <variation>A</variation>
    <location>
        <position position="222"/>
    </location>
</feature>
<feature type="mutagenesis site" description="Reduced number of oocysts in the gut epithelium of the mosquito host; when associated with A-155 and A-222." evidence="5">
    <original>S</original>
    <variation>A</variation>
    <location>
        <position position="414"/>
    </location>
</feature>
<name>PIMM2_PLABA</name>
<organism evidence="11">
    <name type="scientific">Plasmodium berghei (strain Anka)</name>
    <dbReference type="NCBI Taxonomy" id="5823"/>
    <lineage>
        <taxon>Eukaryota</taxon>
        <taxon>Sar</taxon>
        <taxon>Alveolata</taxon>
        <taxon>Apicomplexa</taxon>
        <taxon>Aconoidasida</taxon>
        <taxon>Haemosporida</taxon>
        <taxon>Plasmodiidae</taxon>
        <taxon>Plasmodium</taxon>
        <taxon>Plasmodium (Vinckeia)</taxon>
    </lineage>
</organism>
<protein>
    <recommendedName>
        <fullName evidence="8">Subtilisin-like protease PIMMS2</fullName>
        <ecNumber evidence="2">3.4.21.62</ecNumber>
    </recommendedName>
    <alternativeName>
        <fullName evidence="7">Midgut invasion ookinete protein 2</fullName>
    </alternativeName>
</protein>
<accession>A0A509AKI1</accession>
<keyword id="KW-1003">Cell membrane</keyword>
<keyword id="KW-0378">Hydrolase</keyword>
<keyword id="KW-0472">Membrane</keyword>
<keyword id="KW-0645">Protease</keyword>
<keyword id="KW-1185">Reference proteome</keyword>
<keyword id="KW-0720">Serine protease</keyword>
<dbReference type="EC" id="3.4.21.62" evidence="2"/>
<dbReference type="EMBL" id="LK023126">
    <property type="protein sequence ID" value="VUC56492.1"/>
    <property type="molecule type" value="Genomic_DNA"/>
</dbReference>
<dbReference type="RefSeq" id="XP_679128.1">
    <property type="nucleotide sequence ID" value="XM_674036.1"/>
</dbReference>
<dbReference type="SMR" id="A0A509AKI1"/>
<dbReference type="FunCoup" id="A0A509AKI1">
    <property type="interactions" value="7"/>
</dbReference>
<dbReference type="VEuPathDB" id="PlasmoDB:PBANKA_1106900"/>
<dbReference type="InParanoid" id="A0A509AKI1"/>
<dbReference type="OMA" id="YSYCESS"/>
<dbReference type="BRENDA" id="3.4.21.62">
    <property type="organism ID" value="4887"/>
</dbReference>
<dbReference type="Proteomes" id="UP000074855">
    <property type="component" value="Chromosome 11"/>
</dbReference>
<dbReference type="GO" id="GO:0005886">
    <property type="term" value="C:plasma membrane"/>
    <property type="evidence" value="ECO:0007669"/>
    <property type="project" value="UniProtKB-SubCell"/>
</dbReference>
<dbReference type="GO" id="GO:0004252">
    <property type="term" value="F:serine-type endopeptidase activity"/>
    <property type="evidence" value="ECO:0007669"/>
    <property type="project" value="UniProtKB-EC"/>
</dbReference>
<dbReference type="GO" id="GO:0006508">
    <property type="term" value="P:proteolysis"/>
    <property type="evidence" value="ECO:0007669"/>
    <property type="project" value="UniProtKB-KW"/>
</dbReference>
<dbReference type="Gene3D" id="3.40.50.200">
    <property type="entry name" value="Peptidase S8/S53 domain"/>
    <property type="match status" value="1"/>
</dbReference>
<dbReference type="InterPro" id="IPR036852">
    <property type="entry name" value="Peptidase_S8/S53_dom_sf"/>
</dbReference>
<dbReference type="SUPFAM" id="SSF52743">
    <property type="entry name" value="Subtilisin-like"/>
    <property type="match status" value="1"/>
</dbReference>
<dbReference type="PROSITE" id="PS00136">
    <property type="entry name" value="SUBTILASE_ASP"/>
    <property type="match status" value="1"/>
</dbReference>
<gene>
    <name evidence="7" type="primary">PIMMS2</name>
    <name evidence="10" type="ORF">PBANKA_1106900</name>
</gene>
<evidence type="ECO:0000250" key="1">
    <source>
        <dbReference type="UniProtKB" id="P00782"/>
    </source>
</evidence>
<evidence type="ECO:0000250" key="2">
    <source>
        <dbReference type="UniProtKB" id="Q8I0V0"/>
    </source>
</evidence>
<evidence type="ECO:0000255" key="3">
    <source>
        <dbReference type="PROSITE-ProRule" id="PRU10080"/>
    </source>
</evidence>
<evidence type="ECO:0000256" key="4">
    <source>
        <dbReference type="SAM" id="MobiDB-lite"/>
    </source>
</evidence>
<evidence type="ECO:0000269" key="5">
    <source>
    </source>
</evidence>
<evidence type="ECO:0000269" key="6">
    <source>
    </source>
</evidence>
<evidence type="ECO:0000303" key="7">
    <source>
    </source>
</evidence>
<evidence type="ECO:0000305" key="8"/>
<evidence type="ECO:0000305" key="9">
    <source>
    </source>
</evidence>
<evidence type="ECO:0000312" key="10">
    <source>
        <dbReference type="EMBL" id="VUC56492.1"/>
    </source>
</evidence>
<evidence type="ECO:0000312" key="11">
    <source>
        <dbReference type="Proteomes" id="UP000074855"/>
    </source>
</evidence>
<reference evidence="11" key="1">
    <citation type="journal article" date="2014" name="BMC Biol.">
        <title>A comprehensive evaluation of rodent malaria parasite genomes and gene expression.</title>
        <authorList>
            <person name="Otto T.D."/>
            <person name="Bohme U."/>
            <person name="Jackson A.P."/>
            <person name="Hunt M."/>
            <person name="Franke-Fayard B."/>
            <person name="Hoeijmakers W.A."/>
            <person name="Religa A.A."/>
            <person name="Robertson L."/>
            <person name="Sanders M."/>
            <person name="Ogun S.A."/>
            <person name="Cunningham D."/>
            <person name="Erhart A."/>
            <person name="Billker O."/>
            <person name="Khan S.M."/>
            <person name="Stunnenberg H.G."/>
            <person name="Langhorne J."/>
            <person name="Holder A.A."/>
            <person name="Waters A.P."/>
            <person name="Newbold C.I."/>
            <person name="Pain A."/>
            <person name="Berriman M."/>
            <person name="Janse C.J."/>
        </authorList>
    </citation>
    <scope>NUCLEOTIDE SEQUENCE [LARGE SCALE GENOMIC DNA]</scope>
    <source>
        <strain evidence="11">ANKA</strain>
    </source>
</reference>
<reference evidence="8" key="2">
    <citation type="journal article" date="2017" name="Infect. Immun.">
        <title>Plasmodium berghei PIMMS2 Promotes Ookinete Invasion of the Anopheles gambiae Mosquito Midgut.</title>
        <authorList>
            <person name="Ukegbu C.V."/>
            <person name="Akinosoglou K.A."/>
            <person name="Christophides G.K."/>
            <person name="Vlachou D."/>
        </authorList>
    </citation>
    <scope>FUNCTION</scope>
    <scope>SUBCELLULAR LOCATION</scope>
    <scope>DEVELOPMENTAL STAGE</scope>
    <scope>TOPOLOGY</scope>
    <scope>MUTAGENESIS OF ASP-155; HIS-222 AND SER-414</scope>
</reference>
<reference evidence="8" key="3">
    <citation type="journal article" date="2018" name="Mol. Microbiol.">
        <title>Plasmodium falciparum subtilisin-like ookinete protein SOPT plays an important and conserved role during ookinete infection of the Anopheles stephensi midgut.</title>
        <authorList>
            <person name="Armistead J.S."/>
            <person name="Jennison C."/>
            <person name="O'Neill M.T."/>
            <person name="Lopaticki S."/>
            <person name="Liehl P."/>
            <person name="Hanson K.K."/>
            <person name="Annoura T."/>
            <person name="Rajasekaran P."/>
            <person name="Erickson S.M."/>
            <person name="Tonkin C.J."/>
            <person name="Khan S.M."/>
            <person name="Mota M.M."/>
            <person name="Boddey J.A."/>
        </authorList>
    </citation>
    <scope>FUNCTION</scope>
    <scope>DISRUPTION PHENOTYPE</scope>
</reference>